<feature type="chain" id="PRO_1000053895" description="Uridylate kinase">
    <location>
        <begin position="1"/>
        <end position="239"/>
    </location>
</feature>
<feature type="binding site" evidence="1">
    <location>
        <begin position="13"/>
        <end position="16"/>
    </location>
    <ligand>
        <name>ATP</name>
        <dbReference type="ChEBI" id="CHEBI:30616"/>
    </ligand>
</feature>
<feature type="binding site" evidence="1">
    <location>
        <position position="55"/>
    </location>
    <ligand>
        <name>UMP</name>
        <dbReference type="ChEBI" id="CHEBI:57865"/>
    </ligand>
</feature>
<feature type="binding site" evidence="1">
    <location>
        <position position="56"/>
    </location>
    <ligand>
        <name>ATP</name>
        <dbReference type="ChEBI" id="CHEBI:30616"/>
    </ligand>
</feature>
<feature type="binding site" evidence="1">
    <location>
        <position position="60"/>
    </location>
    <ligand>
        <name>ATP</name>
        <dbReference type="ChEBI" id="CHEBI:30616"/>
    </ligand>
</feature>
<feature type="binding site" evidence="1">
    <location>
        <position position="75"/>
    </location>
    <ligand>
        <name>UMP</name>
        <dbReference type="ChEBI" id="CHEBI:57865"/>
    </ligand>
</feature>
<feature type="binding site" evidence="1">
    <location>
        <begin position="136"/>
        <end position="143"/>
    </location>
    <ligand>
        <name>UMP</name>
        <dbReference type="ChEBI" id="CHEBI:57865"/>
    </ligand>
</feature>
<feature type="binding site" evidence="1">
    <location>
        <position position="163"/>
    </location>
    <ligand>
        <name>ATP</name>
        <dbReference type="ChEBI" id="CHEBI:30616"/>
    </ligand>
</feature>
<feature type="binding site" evidence="1">
    <location>
        <position position="164"/>
    </location>
    <ligand>
        <name>ATP</name>
        <dbReference type="ChEBI" id="CHEBI:30616"/>
    </ligand>
</feature>
<feature type="binding site" evidence="1">
    <location>
        <position position="169"/>
    </location>
    <ligand>
        <name>ATP</name>
        <dbReference type="ChEBI" id="CHEBI:30616"/>
    </ligand>
</feature>
<feature type="binding site" evidence="1">
    <location>
        <position position="172"/>
    </location>
    <ligand>
        <name>ATP</name>
        <dbReference type="ChEBI" id="CHEBI:30616"/>
    </ligand>
</feature>
<gene>
    <name evidence="1" type="primary">pyrH</name>
    <name type="ordered locus">BQ06990</name>
</gene>
<evidence type="ECO:0000255" key="1">
    <source>
        <dbReference type="HAMAP-Rule" id="MF_01220"/>
    </source>
</evidence>
<sequence length="239" mass="25215">MTLALQYKRILLKVSGEALMGGQSFGIDVFVADRIATDIAEVRAMGVEVAIVIGGGNIFRGVAVASHGGDRVTGDHMGMLATAINSLALRTSLTKLGVETVVLSAVAMPQICESFSQRKAIGYMNQGKVVIFAGGTGNPFFTTDSAATLRAAEIGADVLLKGTQVDGIYSADPKIDPTAKRFDQLTHVEILQWGLSVMDTTAVTLARENNVPIIVYSIHEKGGLAKVLNGTGRFTMVSE</sequence>
<proteinExistence type="inferred from homology"/>
<name>PYRH_BARQU</name>
<dbReference type="EC" id="2.7.4.22" evidence="1"/>
<dbReference type="EMBL" id="BX897700">
    <property type="protein sequence ID" value="CAF26188.1"/>
    <property type="molecule type" value="Genomic_DNA"/>
</dbReference>
<dbReference type="RefSeq" id="WP_011179443.1">
    <property type="nucleotide sequence ID" value="NC_005955.1"/>
</dbReference>
<dbReference type="SMR" id="Q6FZN2"/>
<dbReference type="KEGG" id="bqu:BQ06990"/>
<dbReference type="eggNOG" id="COG0528">
    <property type="taxonomic scope" value="Bacteria"/>
</dbReference>
<dbReference type="HOGENOM" id="CLU_033861_0_0_5"/>
<dbReference type="OrthoDB" id="9807458at2"/>
<dbReference type="UniPathway" id="UPA00159">
    <property type="reaction ID" value="UER00275"/>
</dbReference>
<dbReference type="Proteomes" id="UP000000597">
    <property type="component" value="Chromosome"/>
</dbReference>
<dbReference type="GO" id="GO:0005829">
    <property type="term" value="C:cytosol"/>
    <property type="evidence" value="ECO:0007669"/>
    <property type="project" value="TreeGrafter"/>
</dbReference>
<dbReference type="GO" id="GO:0005524">
    <property type="term" value="F:ATP binding"/>
    <property type="evidence" value="ECO:0007669"/>
    <property type="project" value="UniProtKB-KW"/>
</dbReference>
<dbReference type="GO" id="GO:0033862">
    <property type="term" value="F:UMP kinase activity"/>
    <property type="evidence" value="ECO:0007669"/>
    <property type="project" value="UniProtKB-EC"/>
</dbReference>
<dbReference type="GO" id="GO:0044210">
    <property type="term" value="P:'de novo' CTP biosynthetic process"/>
    <property type="evidence" value="ECO:0007669"/>
    <property type="project" value="UniProtKB-UniRule"/>
</dbReference>
<dbReference type="GO" id="GO:0006225">
    <property type="term" value="P:UDP biosynthetic process"/>
    <property type="evidence" value="ECO:0007669"/>
    <property type="project" value="TreeGrafter"/>
</dbReference>
<dbReference type="CDD" id="cd04254">
    <property type="entry name" value="AAK_UMPK-PyrH-Ec"/>
    <property type="match status" value="1"/>
</dbReference>
<dbReference type="FunFam" id="3.40.1160.10:FF:000001">
    <property type="entry name" value="Uridylate kinase"/>
    <property type="match status" value="1"/>
</dbReference>
<dbReference type="Gene3D" id="3.40.1160.10">
    <property type="entry name" value="Acetylglutamate kinase-like"/>
    <property type="match status" value="1"/>
</dbReference>
<dbReference type="HAMAP" id="MF_01220_B">
    <property type="entry name" value="PyrH_B"/>
    <property type="match status" value="1"/>
</dbReference>
<dbReference type="InterPro" id="IPR036393">
    <property type="entry name" value="AceGlu_kinase-like_sf"/>
</dbReference>
<dbReference type="InterPro" id="IPR001048">
    <property type="entry name" value="Asp/Glu/Uridylate_kinase"/>
</dbReference>
<dbReference type="InterPro" id="IPR011817">
    <property type="entry name" value="Uridylate_kinase"/>
</dbReference>
<dbReference type="InterPro" id="IPR015963">
    <property type="entry name" value="Uridylate_kinase_bac"/>
</dbReference>
<dbReference type="NCBIfam" id="TIGR02075">
    <property type="entry name" value="pyrH_bact"/>
    <property type="match status" value="1"/>
</dbReference>
<dbReference type="PANTHER" id="PTHR42833">
    <property type="entry name" value="URIDYLATE KINASE"/>
    <property type="match status" value="1"/>
</dbReference>
<dbReference type="PANTHER" id="PTHR42833:SF4">
    <property type="entry name" value="URIDYLATE KINASE PUMPKIN, CHLOROPLASTIC"/>
    <property type="match status" value="1"/>
</dbReference>
<dbReference type="Pfam" id="PF00696">
    <property type="entry name" value="AA_kinase"/>
    <property type="match status" value="1"/>
</dbReference>
<dbReference type="PIRSF" id="PIRSF005650">
    <property type="entry name" value="Uridylate_kin"/>
    <property type="match status" value="1"/>
</dbReference>
<dbReference type="SUPFAM" id="SSF53633">
    <property type="entry name" value="Carbamate kinase-like"/>
    <property type="match status" value="1"/>
</dbReference>
<organism>
    <name type="scientific">Bartonella quintana (strain Toulouse)</name>
    <name type="common">Rochalimaea quintana</name>
    <dbReference type="NCBI Taxonomy" id="283165"/>
    <lineage>
        <taxon>Bacteria</taxon>
        <taxon>Pseudomonadati</taxon>
        <taxon>Pseudomonadota</taxon>
        <taxon>Alphaproteobacteria</taxon>
        <taxon>Hyphomicrobiales</taxon>
        <taxon>Bartonellaceae</taxon>
        <taxon>Bartonella</taxon>
    </lineage>
</organism>
<keyword id="KW-0067">ATP-binding</keyword>
<keyword id="KW-0963">Cytoplasm</keyword>
<keyword id="KW-0418">Kinase</keyword>
<keyword id="KW-0547">Nucleotide-binding</keyword>
<keyword id="KW-0665">Pyrimidine biosynthesis</keyword>
<keyword id="KW-0808">Transferase</keyword>
<accession>Q6FZN2</accession>
<reference key="1">
    <citation type="journal article" date="2004" name="Proc. Natl. Acad. Sci. U.S.A.">
        <title>The louse-borne human pathogen Bartonella quintana is a genomic derivative of the zoonotic agent Bartonella henselae.</title>
        <authorList>
            <person name="Alsmark U.C.M."/>
            <person name="Frank A.C."/>
            <person name="Karlberg E.O."/>
            <person name="Legault B.-A."/>
            <person name="Ardell D.H."/>
            <person name="Canbaeck B."/>
            <person name="Eriksson A.-S."/>
            <person name="Naeslund A.K."/>
            <person name="Handley S.A."/>
            <person name="Huvet M."/>
            <person name="La Scola B."/>
            <person name="Holmberg M."/>
            <person name="Andersson S.G.E."/>
        </authorList>
    </citation>
    <scope>NUCLEOTIDE SEQUENCE [LARGE SCALE GENOMIC DNA]</scope>
    <source>
        <strain>Toulouse</strain>
    </source>
</reference>
<comment type="function">
    <text evidence="1">Catalyzes the reversible phosphorylation of UMP to UDP.</text>
</comment>
<comment type="catalytic activity">
    <reaction evidence="1">
        <text>UMP + ATP = UDP + ADP</text>
        <dbReference type="Rhea" id="RHEA:24400"/>
        <dbReference type="ChEBI" id="CHEBI:30616"/>
        <dbReference type="ChEBI" id="CHEBI:57865"/>
        <dbReference type="ChEBI" id="CHEBI:58223"/>
        <dbReference type="ChEBI" id="CHEBI:456216"/>
        <dbReference type="EC" id="2.7.4.22"/>
    </reaction>
</comment>
<comment type="activity regulation">
    <text evidence="1">Inhibited by UTP.</text>
</comment>
<comment type="pathway">
    <text evidence="1">Pyrimidine metabolism; CTP biosynthesis via de novo pathway; UDP from UMP (UMPK route): step 1/1.</text>
</comment>
<comment type="subunit">
    <text evidence="1">Homohexamer.</text>
</comment>
<comment type="subcellular location">
    <subcellularLocation>
        <location evidence="1">Cytoplasm</location>
    </subcellularLocation>
</comment>
<comment type="similarity">
    <text evidence="1">Belongs to the UMP kinase family.</text>
</comment>
<protein>
    <recommendedName>
        <fullName evidence="1">Uridylate kinase</fullName>
        <shortName evidence="1">UK</shortName>
        <ecNumber evidence="1">2.7.4.22</ecNumber>
    </recommendedName>
    <alternativeName>
        <fullName evidence="1">Uridine monophosphate kinase</fullName>
        <shortName evidence="1">UMP kinase</shortName>
        <shortName evidence="1">UMPK</shortName>
    </alternativeName>
</protein>